<name>LEUD1_MANSM</name>
<comment type="function">
    <text evidence="1">Catalyzes the isomerization between 2-isopropylmalate and 3-isopropylmalate, via the formation of 2-isopropylmaleate.</text>
</comment>
<comment type="catalytic activity">
    <reaction evidence="1">
        <text>(2R,3S)-3-isopropylmalate = (2S)-2-isopropylmalate</text>
        <dbReference type="Rhea" id="RHEA:32287"/>
        <dbReference type="ChEBI" id="CHEBI:1178"/>
        <dbReference type="ChEBI" id="CHEBI:35121"/>
        <dbReference type="EC" id="4.2.1.33"/>
    </reaction>
</comment>
<comment type="pathway">
    <text evidence="1">Amino-acid biosynthesis; L-leucine biosynthesis; L-leucine from 3-methyl-2-oxobutanoate: step 2/4.</text>
</comment>
<comment type="subunit">
    <text evidence="1">Heterodimer of LeuC and LeuD.</text>
</comment>
<comment type="similarity">
    <text evidence="1">Belongs to the LeuD family. LeuD type 1 subfamily.</text>
</comment>
<accession>Q65VR9</accession>
<protein>
    <recommendedName>
        <fullName evidence="1">3-isopropylmalate dehydratase small subunit 1</fullName>
        <ecNumber evidence="1">4.2.1.33</ecNumber>
    </recommendedName>
    <alternativeName>
        <fullName evidence="1">Alpha-IPM isomerase 1</fullName>
        <shortName evidence="1">IPMI 1</shortName>
    </alternativeName>
    <alternativeName>
        <fullName evidence="1">Isopropylmalate isomerase 1</fullName>
    </alternativeName>
</protein>
<proteinExistence type="inferred from homology"/>
<keyword id="KW-0028">Amino-acid biosynthesis</keyword>
<keyword id="KW-0100">Branched-chain amino acid biosynthesis</keyword>
<keyword id="KW-0432">Leucine biosynthesis</keyword>
<keyword id="KW-0456">Lyase</keyword>
<organism>
    <name type="scientific">Mannheimia succiniciproducens (strain KCTC 0769BP / MBEL55E)</name>
    <dbReference type="NCBI Taxonomy" id="221988"/>
    <lineage>
        <taxon>Bacteria</taxon>
        <taxon>Pseudomonadati</taxon>
        <taxon>Pseudomonadota</taxon>
        <taxon>Gammaproteobacteria</taxon>
        <taxon>Pasteurellales</taxon>
        <taxon>Pasteurellaceae</taxon>
        <taxon>Basfia</taxon>
    </lineage>
</organism>
<sequence>MDKFTLITAKAAPMMAANTDTDVIMPKQFLKGIDRKGLDRGVFFDLRFNLDGTPNEKFILNQADWQGSQFLVVGPNFGCGSSREHAVWGLKQLGIRALIGTSFAGIFNDNCLRNGVLTICVSDQEIEQIATTVSNPATNTISVDLEGQKVLTENGEIAFDVDPLKKEMLIKGLDAVGFTLSMKDDILAFEQSYFKANPWLKL</sequence>
<gene>
    <name evidence="1" type="primary">leuD1</name>
    <name type="ordered locus">MS0334</name>
</gene>
<reference key="1">
    <citation type="journal article" date="2004" name="Nat. Biotechnol.">
        <title>The genome sequence of the capnophilic rumen bacterium Mannheimia succiniciproducens.</title>
        <authorList>
            <person name="Hong S.H."/>
            <person name="Kim J.S."/>
            <person name="Lee S.Y."/>
            <person name="In Y.H."/>
            <person name="Choi S.S."/>
            <person name="Rih J.-K."/>
            <person name="Kim C.H."/>
            <person name="Jeong H."/>
            <person name="Hur C.G."/>
            <person name="Kim J.J."/>
        </authorList>
    </citation>
    <scope>NUCLEOTIDE SEQUENCE [LARGE SCALE GENOMIC DNA]</scope>
    <source>
        <strain>KCTC 0769BP / MBEL55E</strain>
    </source>
</reference>
<evidence type="ECO:0000255" key="1">
    <source>
        <dbReference type="HAMAP-Rule" id="MF_01031"/>
    </source>
</evidence>
<feature type="chain" id="PRO_0000141833" description="3-isopropylmalate dehydratase small subunit 1">
    <location>
        <begin position="1"/>
        <end position="202"/>
    </location>
</feature>
<dbReference type="EC" id="4.2.1.33" evidence="1"/>
<dbReference type="EMBL" id="AE016827">
    <property type="protein sequence ID" value="AAU36941.1"/>
    <property type="molecule type" value="Genomic_DNA"/>
</dbReference>
<dbReference type="RefSeq" id="WP_011199516.1">
    <property type="nucleotide sequence ID" value="NC_006300.1"/>
</dbReference>
<dbReference type="SMR" id="Q65VR9"/>
<dbReference type="STRING" id="221988.MS0334"/>
<dbReference type="KEGG" id="msu:MS0334"/>
<dbReference type="eggNOG" id="COG0066">
    <property type="taxonomic scope" value="Bacteria"/>
</dbReference>
<dbReference type="HOGENOM" id="CLU_081378_0_3_6"/>
<dbReference type="OrthoDB" id="9777465at2"/>
<dbReference type="UniPathway" id="UPA00048">
    <property type="reaction ID" value="UER00071"/>
</dbReference>
<dbReference type="Proteomes" id="UP000000607">
    <property type="component" value="Chromosome"/>
</dbReference>
<dbReference type="GO" id="GO:0009316">
    <property type="term" value="C:3-isopropylmalate dehydratase complex"/>
    <property type="evidence" value="ECO:0007669"/>
    <property type="project" value="InterPro"/>
</dbReference>
<dbReference type="GO" id="GO:0003861">
    <property type="term" value="F:3-isopropylmalate dehydratase activity"/>
    <property type="evidence" value="ECO:0007669"/>
    <property type="project" value="UniProtKB-UniRule"/>
</dbReference>
<dbReference type="GO" id="GO:0009098">
    <property type="term" value="P:L-leucine biosynthetic process"/>
    <property type="evidence" value="ECO:0007669"/>
    <property type="project" value="UniProtKB-UniRule"/>
</dbReference>
<dbReference type="CDD" id="cd01577">
    <property type="entry name" value="IPMI_Swivel"/>
    <property type="match status" value="1"/>
</dbReference>
<dbReference type="Gene3D" id="3.20.19.10">
    <property type="entry name" value="Aconitase, domain 4"/>
    <property type="match status" value="1"/>
</dbReference>
<dbReference type="HAMAP" id="MF_01031">
    <property type="entry name" value="LeuD_type1"/>
    <property type="match status" value="1"/>
</dbReference>
<dbReference type="InterPro" id="IPR004431">
    <property type="entry name" value="3-IsopropMal_deHydase_ssu"/>
</dbReference>
<dbReference type="InterPro" id="IPR015928">
    <property type="entry name" value="Aconitase/3IPM_dehydase_swvl"/>
</dbReference>
<dbReference type="InterPro" id="IPR000573">
    <property type="entry name" value="AconitaseA/IPMdHydase_ssu_swvl"/>
</dbReference>
<dbReference type="InterPro" id="IPR033940">
    <property type="entry name" value="IPMI_Swivel"/>
</dbReference>
<dbReference type="InterPro" id="IPR050075">
    <property type="entry name" value="LeuD"/>
</dbReference>
<dbReference type="NCBIfam" id="TIGR00171">
    <property type="entry name" value="leuD"/>
    <property type="match status" value="1"/>
</dbReference>
<dbReference type="NCBIfam" id="NF002458">
    <property type="entry name" value="PRK01641.1"/>
    <property type="match status" value="1"/>
</dbReference>
<dbReference type="PANTHER" id="PTHR43345:SF5">
    <property type="entry name" value="3-ISOPROPYLMALATE DEHYDRATASE SMALL SUBUNIT"/>
    <property type="match status" value="1"/>
</dbReference>
<dbReference type="PANTHER" id="PTHR43345">
    <property type="entry name" value="3-ISOPROPYLMALATE DEHYDRATASE SMALL SUBUNIT 2-RELATED-RELATED"/>
    <property type="match status" value="1"/>
</dbReference>
<dbReference type="Pfam" id="PF00694">
    <property type="entry name" value="Aconitase_C"/>
    <property type="match status" value="1"/>
</dbReference>
<dbReference type="SUPFAM" id="SSF52016">
    <property type="entry name" value="LeuD/IlvD-like"/>
    <property type="match status" value="1"/>
</dbReference>